<dbReference type="EMBL" id="CP000284">
    <property type="protein sequence ID" value="ABE48571.1"/>
    <property type="molecule type" value="Genomic_DNA"/>
</dbReference>
<dbReference type="RefSeq" id="WP_011478668.1">
    <property type="nucleotide sequence ID" value="NC_007947.1"/>
</dbReference>
<dbReference type="SMR" id="Q1H4L6"/>
<dbReference type="STRING" id="265072.Mfla_0300"/>
<dbReference type="KEGG" id="mfa:Mfla_0300"/>
<dbReference type="eggNOG" id="COG0361">
    <property type="taxonomic scope" value="Bacteria"/>
</dbReference>
<dbReference type="HOGENOM" id="CLU_151267_1_0_4"/>
<dbReference type="OrthoDB" id="9803250at2"/>
<dbReference type="Proteomes" id="UP000002440">
    <property type="component" value="Chromosome"/>
</dbReference>
<dbReference type="GO" id="GO:0005829">
    <property type="term" value="C:cytosol"/>
    <property type="evidence" value="ECO:0007669"/>
    <property type="project" value="TreeGrafter"/>
</dbReference>
<dbReference type="GO" id="GO:0043022">
    <property type="term" value="F:ribosome binding"/>
    <property type="evidence" value="ECO:0007669"/>
    <property type="project" value="UniProtKB-UniRule"/>
</dbReference>
<dbReference type="GO" id="GO:0019843">
    <property type="term" value="F:rRNA binding"/>
    <property type="evidence" value="ECO:0007669"/>
    <property type="project" value="UniProtKB-UniRule"/>
</dbReference>
<dbReference type="GO" id="GO:0003743">
    <property type="term" value="F:translation initiation factor activity"/>
    <property type="evidence" value="ECO:0007669"/>
    <property type="project" value="UniProtKB-UniRule"/>
</dbReference>
<dbReference type="CDD" id="cd04451">
    <property type="entry name" value="S1_IF1"/>
    <property type="match status" value="1"/>
</dbReference>
<dbReference type="FunFam" id="2.40.50.140:FF:000002">
    <property type="entry name" value="Translation initiation factor IF-1"/>
    <property type="match status" value="1"/>
</dbReference>
<dbReference type="Gene3D" id="2.40.50.140">
    <property type="entry name" value="Nucleic acid-binding proteins"/>
    <property type="match status" value="1"/>
</dbReference>
<dbReference type="HAMAP" id="MF_00075">
    <property type="entry name" value="IF_1"/>
    <property type="match status" value="1"/>
</dbReference>
<dbReference type="InterPro" id="IPR012340">
    <property type="entry name" value="NA-bd_OB-fold"/>
</dbReference>
<dbReference type="InterPro" id="IPR006196">
    <property type="entry name" value="RNA-binding_domain_S1_IF1"/>
</dbReference>
<dbReference type="InterPro" id="IPR004368">
    <property type="entry name" value="TIF_IF1"/>
</dbReference>
<dbReference type="NCBIfam" id="TIGR00008">
    <property type="entry name" value="infA"/>
    <property type="match status" value="1"/>
</dbReference>
<dbReference type="PANTHER" id="PTHR33370">
    <property type="entry name" value="TRANSLATION INITIATION FACTOR IF-1, CHLOROPLASTIC"/>
    <property type="match status" value="1"/>
</dbReference>
<dbReference type="PANTHER" id="PTHR33370:SF1">
    <property type="entry name" value="TRANSLATION INITIATION FACTOR IF-1, CHLOROPLASTIC"/>
    <property type="match status" value="1"/>
</dbReference>
<dbReference type="Pfam" id="PF01176">
    <property type="entry name" value="eIF-1a"/>
    <property type="match status" value="1"/>
</dbReference>
<dbReference type="SUPFAM" id="SSF50249">
    <property type="entry name" value="Nucleic acid-binding proteins"/>
    <property type="match status" value="1"/>
</dbReference>
<dbReference type="PROSITE" id="PS50832">
    <property type="entry name" value="S1_IF1_TYPE"/>
    <property type="match status" value="1"/>
</dbReference>
<name>IF11_METFK</name>
<proteinExistence type="inferred from homology"/>
<evidence type="ECO:0000255" key="1">
    <source>
        <dbReference type="HAMAP-Rule" id="MF_00075"/>
    </source>
</evidence>
<reference key="1">
    <citation type="submission" date="2006-03" db="EMBL/GenBank/DDBJ databases">
        <title>Complete sequence of Methylobacillus flagellatus KT.</title>
        <authorList>
            <consortium name="US DOE Joint Genome Institute"/>
            <person name="Copeland A."/>
            <person name="Lucas S."/>
            <person name="Lapidus A."/>
            <person name="Barry K."/>
            <person name="Detter J.C."/>
            <person name="Glavina del Rio T."/>
            <person name="Hammon N."/>
            <person name="Israni S."/>
            <person name="Dalin E."/>
            <person name="Tice H."/>
            <person name="Pitluck S."/>
            <person name="Brettin T."/>
            <person name="Bruce D."/>
            <person name="Han C."/>
            <person name="Tapia R."/>
            <person name="Saunders E."/>
            <person name="Gilna P."/>
            <person name="Schmutz J."/>
            <person name="Larimer F."/>
            <person name="Land M."/>
            <person name="Kyrpides N."/>
            <person name="Anderson I."/>
            <person name="Richardson P."/>
        </authorList>
    </citation>
    <scope>NUCLEOTIDE SEQUENCE [LARGE SCALE GENOMIC DNA]</scope>
    <source>
        <strain>ATCC 51484 / DSM 6875 / VKM B-1610 / KT</strain>
    </source>
</reference>
<comment type="function">
    <text evidence="1">One of the essential components for the initiation of protein synthesis. Stabilizes the binding of IF-2 and IF-3 on the 30S subunit to which N-formylmethionyl-tRNA(fMet) subsequently binds. Helps modulate mRNA selection, yielding the 30S pre-initiation complex (PIC). Upon addition of the 50S ribosomal subunit IF-1, IF-2 and IF-3 are released leaving the mature 70S translation initiation complex.</text>
</comment>
<comment type="subunit">
    <text evidence="1">Component of the 30S ribosomal translation pre-initiation complex which assembles on the 30S ribosome in the order IF-2 and IF-3, IF-1 and N-formylmethionyl-tRNA(fMet); mRNA recruitment can occur at any time during PIC assembly.</text>
</comment>
<comment type="subcellular location">
    <subcellularLocation>
        <location evidence="1">Cytoplasm</location>
    </subcellularLocation>
</comment>
<comment type="similarity">
    <text evidence="1">Belongs to the IF-1 family.</text>
</comment>
<sequence length="72" mass="8348">MAKEDRIEMQGEVLENLPNATFRVKLENGHVVLGYISGKMRMHYIRILPGDKVTVEMTPYDLSRARIIFRAK</sequence>
<keyword id="KW-0963">Cytoplasm</keyword>
<keyword id="KW-0396">Initiation factor</keyword>
<keyword id="KW-0648">Protein biosynthesis</keyword>
<keyword id="KW-1185">Reference proteome</keyword>
<keyword id="KW-0694">RNA-binding</keyword>
<keyword id="KW-0699">rRNA-binding</keyword>
<protein>
    <recommendedName>
        <fullName evidence="1">Translation initiation factor IF-1 1</fullName>
    </recommendedName>
</protein>
<organism>
    <name type="scientific">Methylobacillus flagellatus (strain ATCC 51484 / DSM 6875 / VKM B-1610 / KT)</name>
    <dbReference type="NCBI Taxonomy" id="265072"/>
    <lineage>
        <taxon>Bacteria</taxon>
        <taxon>Pseudomonadati</taxon>
        <taxon>Pseudomonadota</taxon>
        <taxon>Betaproteobacteria</taxon>
        <taxon>Nitrosomonadales</taxon>
        <taxon>Methylophilaceae</taxon>
        <taxon>Methylobacillus</taxon>
    </lineage>
</organism>
<feature type="chain" id="PRO_0000263819" description="Translation initiation factor IF-1 1">
    <location>
        <begin position="1"/>
        <end position="72"/>
    </location>
</feature>
<feature type="domain" description="S1-like" evidence="1">
    <location>
        <begin position="1"/>
        <end position="72"/>
    </location>
</feature>
<accession>Q1H4L6</accession>
<gene>
    <name evidence="1" type="primary">infA1</name>
    <name type="ordered locus">Mfla_0300</name>
</gene>